<dbReference type="EC" id="2.3.2.27"/>
<dbReference type="EC" id="3.6.4.-"/>
<dbReference type="EMBL" id="U66564">
    <property type="protein sequence ID" value="AAC18656.1"/>
    <property type="molecule type" value="mRNA"/>
</dbReference>
<dbReference type="EMBL" id="U66565">
    <property type="protein sequence ID" value="AAC48693.1"/>
    <property type="molecule type" value="mRNA"/>
</dbReference>
<dbReference type="RefSeq" id="NP_001075845.1">
    <molecule id="Q95216-2"/>
    <property type="nucleotide sequence ID" value="NM_001082376.1"/>
</dbReference>
<dbReference type="RefSeq" id="NP_001108200.1">
    <molecule id="Q95216-1"/>
    <property type="nucleotide sequence ID" value="NM_001114728.1"/>
</dbReference>
<dbReference type="SMR" id="Q95216"/>
<dbReference type="FunCoup" id="Q95216">
    <property type="interactions" value="1650"/>
</dbReference>
<dbReference type="STRING" id="9986.ENSOCUP00000047915"/>
<dbReference type="iPTMnet" id="Q95216"/>
<dbReference type="PaxDb" id="9986-ENSOCUP00000003055"/>
<dbReference type="GeneID" id="100009232"/>
<dbReference type="KEGG" id="ocu:100009232"/>
<dbReference type="CTD" id="6596"/>
<dbReference type="eggNOG" id="KOG1001">
    <property type="taxonomic scope" value="Eukaryota"/>
</dbReference>
<dbReference type="InParanoid" id="Q95216"/>
<dbReference type="OrthoDB" id="276744at2759"/>
<dbReference type="UniPathway" id="UPA00143"/>
<dbReference type="Proteomes" id="UP000001811">
    <property type="component" value="Unplaced"/>
</dbReference>
<dbReference type="GO" id="GO:0005737">
    <property type="term" value="C:cytoplasm"/>
    <property type="evidence" value="ECO:0000314"/>
    <property type="project" value="UniProtKB"/>
</dbReference>
<dbReference type="GO" id="GO:0005730">
    <property type="term" value="C:nucleolus"/>
    <property type="evidence" value="ECO:0000314"/>
    <property type="project" value="UniProtKB"/>
</dbReference>
<dbReference type="GO" id="GO:0005654">
    <property type="term" value="C:nucleoplasm"/>
    <property type="evidence" value="ECO:0000314"/>
    <property type="project" value="UniProtKB"/>
</dbReference>
<dbReference type="GO" id="GO:0005524">
    <property type="term" value="F:ATP binding"/>
    <property type="evidence" value="ECO:0007669"/>
    <property type="project" value="UniProtKB-KW"/>
</dbReference>
<dbReference type="GO" id="GO:0008094">
    <property type="term" value="F:ATP-dependent activity, acting on DNA"/>
    <property type="evidence" value="ECO:0007669"/>
    <property type="project" value="TreeGrafter"/>
</dbReference>
<dbReference type="GO" id="GO:0003677">
    <property type="term" value="F:DNA binding"/>
    <property type="evidence" value="ECO:0007669"/>
    <property type="project" value="UniProtKB-KW"/>
</dbReference>
<dbReference type="GO" id="GO:0004386">
    <property type="term" value="F:helicase activity"/>
    <property type="evidence" value="ECO:0007669"/>
    <property type="project" value="UniProtKB-KW"/>
</dbReference>
<dbReference type="GO" id="GO:0016818">
    <property type="term" value="F:hydrolase activity, acting on acid anhydrides, in phosphorus-containing anhydrides"/>
    <property type="evidence" value="ECO:0007669"/>
    <property type="project" value="InterPro"/>
</dbReference>
<dbReference type="GO" id="GO:0016740">
    <property type="term" value="F:transferase activity"/>
    <property type="evidence" value="ECO:0007669"/>
    <property type="project" value="UniProtKB-KW"/>
</dbReference>
<dbReference type="GO" id="GO:0008270">
    <property type="term" value="F:zinc ion binding"/>
    <property type="evidence" value="ECO:0007669"/>
    <property type="project" value="UniProtKB-KW"/>
</dbReference>
<dbReference type="GO" id="GO:0006325">
    <property type="term" value="P:chromatin organization"/>
    <property type="evidence" value="ECO:0007669"/>
    <property type="project" value="UniProtKB-KW"/>
</dbReference>
<dbReference type="GO" id="GO:0006281">
    <property type="term" value="P:DNA repair"/>
    <property type="evidence" value="ECO:0007669"/>
    <property type="project" value="TreeGrafter"/>
</dbReference>
<dbReference type="GO" id="GO:0016567">
    <property type="term" value="P:protein ubiquitination"/>
    <property type="evidence" value="ECO:0007669"/>
    <property type="project" value="UniProtKB-UniPathway"/>
</dbReference>
<dbReference type="CDD" id="cd18071">
    <property type="entry name" value="DEXHc_HLTF1_SMARC3"/>
    <property type="match status" value="1"/>
</dbReference>
<dbReference type="CDD" id="cd16509">
    <property type="entry name" value="RING-HC_HLTF"/>
    <property type="match status" value="1"/>
</dbReference>
<dbReference type="CDD" id="cd18793">
    <property type="entry name" value="SF2_C_SNF"/>
    <property type="match status" value="1"/>
</dbReference>
<dbReference type="FunFam" id="3.40.50.10810:FF:000023">
    <property type="entry name" value="helicase-like transcription factor isoform X1"/>
    <property type="match status" value="1"/>
</dbReference>
<dbReference type="FunFam" id="3.30.70.2330:FF:000001">
    <property type="entry name" value="helicase-like transcription factor isoform X2"/>
    <property type="match status" value="1"/>
</dbReference>
<dbReference type="FunFam" id="3.40.50.10810:FF:000027">
    <property type="entry name" value="helicase-like transcription factor isoform X3"/>
    <property type="match status" value="1"/>
</dbReference>
<dbReference type="Gene3D" id="3.30.70.2330">
    <property type="match status" value="1"/>
</dbReference>
<dbReference type="Gene3D" id="3.40.50.300">
    <property type="entry name" value="P-loop containing nucleotide triphosphate hydrolases"/>
    <property type="match status" value="1"/>
</dbReference>
<dbReference type="Gene3D" id="3.40.50.10810">
    <property type="entry name" value="Tandem AAA-ATPase domain"/>
    <property type="match status" value="2"/>
</dbReference>
<dbReference type="Gene3D" id="3.30.40.10">
    <property type="entry name" value="Zinc/RING finger domain, C3HC4 (zinc finger)"/>
    <property type="match status" value="1"/>
</dbReference>
<dbReference type="InterPro" id="IPR014001">
    <property type="entry name" value="Helicase_ATP-bd"/>
</dbReference>
<dbReference type="InterPro" id="IPR001650">
    <property type="entry name" value="Helicase_C-like"/>
</dbReference>
<dbReference type="InterPro" id="IPR014905">
    <property type="entry name" value="HIRAN"/>
</dbReference>
<dbReference type="InterPro" id="IPR027417">
    <property type="entry name" value="P-loop_NTPase"/>
</dbReference>
<dbReference type="InterPro" id="IPR038718">
    <property type="entry name" value="SNF2-like_sf"/>
</dbReference>
<dbReference type="InterPro" id="IPR049730">
    <property type="entry name" value="SNF2/RAD54-like_C"/>
</dbReference>
<dbReference type="InterPro" id="IPR000330">
    <property type="entry name" value="SNF2_N"/>
</dbReference>
<dbReference type="InterPro" id="IPR050628">
    <property type="entry name" value="SNF2_RAD54_helicase_TF"/>
</dbReference>
<dbReference type="InterPro" id="IPR001841">
    <property type="entry name" value="Znf_RING"/>
</dbReference>
<dbReference type="InterPro" id="IPR013083">
    <property type="entry name" value="Znf_RING/FYVE/PHD"/>
</dbReference>
<dbReference type="InterPro" id="IPR017907">
    <property type="entry name" value="Znf_RING_CS"/>
</dbReference>
<dbReference type="PANTHER" id="PTHR45626:SF17">
    <property type="entry name" value="HELICASE-LIKE TRANSCRIPTION FACTOR"/>
    <property type="match status" value="1"/>
</dbReference>
<dbReference type="PANTHER" id="PTHR45626">
    <property type="entry name" value="TRANSCRIPTION TERMINATION FACTOR 2-RELATED"/>
    <property type="match status" value="1"/>
</dbReference>
<dbReference type="Pfam" id="PF00271">
    <property type="entry name" value="Helicase_C"/>
    <property type="match status" value="1"/>
</dbReference>
<dbReference type="Pfam" id="PF08797">
    <property type="entry name" value="HIRAN"/>
    <property type="match status" value="1"/>
</dbReference>
<dbReference type="Pfam" id="PF00176">
    <property type="entry name" value="SNF2-rel_dom"/>
    <property type="match status" value="1"/>
</dbReference>
<dbReference type="Pfam" id="PF13923">
    <property type="entry name" value="zf-C3HC4_2"/>
    <property type="match status" value="1"/>
</dbReference>
<dbReference type="SMART" id="SM00487">
    <property type="entry name" value="DEXDc"/>
    <property type="match status" value="1"/>
</dbReference>
<dbReference type="SMART" id="SM00490">
    <property type="entry name" value="HELICc"/>
    <property type="match status" value="1"/>
</dbReference>
<dbReference type="SMART" id="SM00910">
    <property type="entry name" value="HIRAN"/>
    <property type="match status" value="1"/>
</dbReference>
<dbReference type="SMART" id="SM00184">
    <property type="entry name" value="RING"/>
    <property type="match status" value="1"/>
</dbReference>
<dbReference type="SUPFAM" id="SSF52540">
    <property type="entry name" value="P-loop containing nucleoside triphosphate hydrolases"/>
    <property type="match status" value="2"/>
</dbReference>
<dbReference type="SUPFAM" id="SSF57850">
    <property type="entry name" value="RING/U-box"/>
    <property type="match status" value="1"/>
</dbReference>
<dbReference type="PROSITE" id="PS51192">
    <property type="entry name" value="HELICASE_ATP_BIND_1"/>
    <property type="match status" value="1"/>
</dbReference>
<dbReference type="PROSITE" id="PS51194">
    <property type="entry name" value="HELICASE_CTER"/>
    <property type="match status" value="1"/>
</dbReference>
<dbReference type="PROSITE" id="PS00518">
    <property type="entry name" value="ZF_RING_1"/>
    <property type="match status" value="1"/>
</dbReference>
<dbReference type="PROSITE" id="PS50089">
    <property type="entry name" value="ZF_RING_2"/>
    <property type="match status" value="1"/>
</dbReference>
<sequence>MSWMFKRDPVWKYLQTVQYGVHGNFSRLSYPTFFPRFEFQDIIPPDDFLTSDEELDSVLFGTLRGHVVGLRYYTGVVNNNEMVALQREPNNPYDKNAIKVNNVNGNQVGYLKKELAAALAYIMDNKLAQIEGVVPYGANNAFTMPLQMTFWGKEENRKAVLDQLKKHGFKLGPAPKTLGFSLESGWGSGRAGPSYSMPVHAAIQMTTEQLKTEFDKLFEDLKEDDKTQEMEPAEAVETPLLPHQKQALAWMVSRENSRELPPFWELRNDLYYNTITNFSEKDQPENVHGGILADDMGLGKTLTAIAVILTNFHDGKPLPVERMKKNQVKKECNSSESDKPGRKDTIKKTDGLSKEGSRYSEEPSISDVKKNKYSMSELSSSQPKRKKIAVQYIESSDSEEIEISELPQKMKGKLKNVQSETKRVKVGPSKIKEDTAFACALTSSASTTTKKILKKGASAQRVQRKLMFEERPRTTLIICPLSVLSNWIDQFGQHIKSDVHLNFYVYYGPDRIRDPALLSKQDIVLTTYNILTHDYGTKGDSPLHSIRWLRVILDEGHAIRNPNAQQTKAVLDLEAERRWVLTGTPIQNSLKDLWSLLSFLKLKPFVDREWWHRTIQRPVTMGDEGGLRRLQSLIKNITLRRTKTSKIKGKPVLELPERPVFIQHITLSDEERKIYQSVKSEGKATIGRYFNEGTVLAHYADVLGLLLRLRQICCHTHLLTNTVSSSGPSGNDTPEELRKKLIKKMKLILSSGSDEECAICLDSLTVPVITHCAHVFCKPCICQCIQNEQPHAKCPLCRNDIHGDNLLECPPEELACDSEKKSNMEWTSSSKINALMHALIDLRTKNPNIKSLVVSQFTTFLSLIETPLKASGFVFTRLDGSMAQKKRVESIQCFQNTEAGSPTIMLLSLKAGGVGLNLCAASRVFLMDPAWNPAAEDQRFDRCHRLGQKQEVIITKFIVKDSVEENMLKIQNTKRELAAGAFGTKKNANEMKQAKINEIRTLIDL</sequence>
<feature type="chain" id="PRO_0000056186" description="Helicase-like transcription factor">
    <location>
        <begin position="1"/>
        <end position="1005"/>
    </location>
</feature>
<feature type="domain" description="Helicase ATP-binding" evidence="4">
    <location>
        <begin position="427"/>
        <end position="603"/>
    </location>
</feature>
<feature type="domain" description="Helicase C-terminal" evidence="5">
    <location>
        <begin position="834"/>
        <end position="999"/>
    </location>
</feature>
<feature type="DNA-binding region" evidence="1">
    <location>
        <begin position="38"/>
        <end position="287"/>
    </location>
</feature>
<feature type="zinc finger region" description="RING-type" evidence="3">
    <location>
        <begin position="757"/>
        <end position="798"/>
    </location>
</feature>
<feature type="region of interest" description="Disordered" evidence="6">
    <location>
        <begin position="325"/>
        <end position="385"/>
    </location>
</feature>
<feature type="region of interest" description="Required for interaction with the RFBP isoform of ATP11B">
    <location>
        <begin position="767"/>
        <end position="772"/>
    </location>
</feature>
<feature type="region of interest" description="Required for interaction with the RFBP isoform of ATP11B">
    <location>
        <begin position="791"/>
        <end position="796"/>
    </location>
</feature>
<feature type="region of interest" description="Interaction with SP1 and SP3" evidence="1">
    <location>
        <begin position="922"/>
        <end position="1005"/>
    </location>
</feature>
<feature type="short sequence motif" description="DEGH box">
    <location>
        <begin position="554"/>
        <end position="557"/>
    </location>
</feature>
<feature type="compositionally biased region" description="Basic and acidic residues" evidence="6">
    <location>
        <begin position="325"/>
        <end position="361"/>
    </location>
</feature>
<feature type="compositionally biased region" description="Polar residues" evidence="6">
    <location>
        <begin position="373"/>
        <end position="382"/>
    </location>
</feature>
<feature type="binding site" evidence="4">
    <location>
        <begin position="294"/>
        <end position="301"/>
    </location>
    <ligand>
        <name>ATP</name>
        <dbReference type="ChEBI" id="CHEBI:30616"/>
    </ligand>
</feature>
<feature type="modified residue" description="Omega-N-methylarginine" evidence="2">
    <location>
        <position position="27"/>
    </location>
</feature>
<feature type="modified residue" description="Phosphotyrosine; by JAK2" evidence="16">
    <location>
        <position position="195"/>
    </location>
</feature>
<feature type="modified residue" description="Phosphoserine" evidence="2">
    <location>
        <position position="395"/>
    </location>
</feature>
<feature type="modified residue" description="Phosphoserine" evidence="2">
    <location>
        <position position="396"/>
    </location>
</feature>
<feature type="modified residue" description="Phosphoserine" evidence="2">
    <location>
        <position position="398"/>
    </location>
</feature>
<feature type="modified residue" description="Phosphothreonine" evidence="2">
    <location>
        <position position="733"/>
    </location>
</feature>
<feature type="cross-link" description="Glycyl lysine isopeptide (Lys-Gly) (interchain with G-Cter in SUMO2)" evidence="2">
    <location>
        <position position="112"/>
    </location>
</feature>
<feature type="cross-link" description="Glycyl lysine isopeptide (Lys-Gly) (interchain with G-Cter in SUMO2)" evidence="2">
    <location>
        <position position="211"/>
    </location>
</feature>
<feature type="splice variant" id="VSP_012923" description="In isoform 2." evidence="19">
    <original>INALM</original>
    <variation>RFLSC</variation>
    <location>
        <begin position="832"/>
        <end position="836"/>
    </location>
</feature>
<feature type="splice variant" id="VSP_012924" description="In isoform 2." evidence="19">
    <location>
        <begin position="837"/>
        <end position="1005"/>
    </location>
</feature>
<feature type="mutagenesis site" description="Abolishes binding to the RFBP isoform of ATP11B." evidence="13">
    <original>P</original>
    <variation>S</variation>
    <variation>T</variation>
    <location>
        <position position="767"/>
    </location>
</feature>
<feature type="mutagenesis site" description="Abolishes binding to the RFBP isoform of ATP11B." evidence="13">
    <original>V</original>
    <variation>R</variation>
    <location>
        <position position="768"/>
    </location>
</feature>
<feature type="mutagenesis site" description="Abolishes binding to the RFBP isoform of ATP11B." evidence="13">
    <original>I</original>
    <variation>M</variation>
    <variation>P</variation>
    <location>
        <position position="769"/>
    </location>
</feature>
<feature type="mutagenesis site" description="Abolishes binding to the RFBP isoform of ATP11B." evidence="13">
    <original>H</original>
    <variation>D</variation>
    <variation>K</variation>
    <location>
        <position position="771"/>
    </location>
</feature>
<feature type="mutagenesis site" description="Abolishes binding to the RFBP isoform of ATP11B." evidence="13">
    <original>A</original>
    <variation>Q</variation>
    <location>
        <position position="792"/>
    </location>
</feature>
<feature type="mutagenesis site" description="Abolishes binding to the RFBP isoform of ATP11B." evidence="13">
    <original>K</original>
    <variation>P</variation>
    <location>
        <position position="793"/>
    </location>
</feature>
<accession>Q95216</accession>
<accession>Q95217</accession>
<keyword id="KW-0010">Activator</keyword>
<keyword id="KW-0025">Alternative splicing</keyword>
<keyword id="KW-0067">ATP-binding</keyword>
<keyword id="KW-0156">Chromatin regulator</keyword>
<keyword id="KW-0963">Cytoplasm</keyword>
<keyword id="KW-0238">DNA-binding</keyword>
<keyword id="KW-0347">Helicase</keyword>
<keyword id="KW-0378">Hydrolase</keyword>
<keyword id="KW-1017">Isopeptide bond</keyword>
<keyword id="KW-0479">Metal-binding</keyword>
<keyword id="KW-0488">Methylation</keyword>
<keyword id="KW-0511">Multifunctional enzyme</keyword>
<keyword id="KW-0547">Nucleotide-binding</keyword>
<keyword id="KW-0539">Nucleus</keyword>
<keyword id="KW-0597">Phosphoprotein</keyword>
<keyword id="KW-1185">Reference proteome</keyword>
<keyword id="KW-0804">Transcription</keyword>
<keyword id="KW-0808">Transferase</keyword>
<keyword id="KW-0832">Ubl conjugation</keyword>
<keyword id="KW-0833">Ubl conjugation pathway</keyword>
<keyword id="KW-0862">Zinc</keyword>
<keyword id="KW-0863">Zinc-finger</keyword>
<reference key="1">
    <citation type="journal article" date="1996" name="Mol. Endocrinol.">
        <title>Cloning, characterization, and steroid-dependent posttranscriptional processing of RUSH-1 alpha and beta, two uteroglobin promoter-binding proteins.</title>
        <authorList>
            <person name="Hayward-Lester A."/>
            <person name="Hewetson A."/>
            <person name="Beale E.G."/>
            <person name="Oefner P.J."/>
            <person name="Doris P.A."/>
            <person name="Chilton B.S."/>
        </authorList>
    </citation>
    <scope>NUCLEOTIDE SEQUENCE [MRNA] (ISOFORMS 1 AND 2)</scope>
    <scope>INDUCTION</scope>
    <scope>TISSUE SPECIFICITY</scope>
    <source>
        <strain>New Zealand white</strain>
        <tissue>Endometrium</tissue>
    </source>
</reference>
<reference key="2">
    <citation type="journal article" date="1997" name="Gene">
        <title>Quantification of alternatively spliced RUSH mRNA isoforms by QRT-PCR and IP-RP-HPLC analysis: a new approach to measuring regulated splicing efficiency.</title>
        <authorList>
            <person name="Robinson C.A."/>
            <person name="Hayward-Lester A."/>
            <person name="Hewetson A."/>
            <person name="Oefner P.J."/>
            <person name="Doris P.A."/>
            <person name="Chilton B.S."/>
        </authorList>
    </citation>
    <scope>ALTERNATIVE SPLICING</scope>
    <scope>TISSUE SPECIFICITY</scope>
</reference>
<reference key="3">
    <citation type="journal article" date="2000" name="Biol. Reprod.">
        <title>Expression of RUSH transcription factors in developing and adult rabbit gonads.</title>
        <authorList>
            <person name="Rendon A."/>
            <person name="Hewetson A."/>
            <person name="Chilton B.S."/>
            <person name="Lee V.H."/>
        </authorList>
    </citation>
    <scope>TISSUE SPECIFICITY</scope>
</reference>
<reference key="4">
    <citation type="journal article" date="2001" name="J. Biol. Chem.">
        <title>Cloning and characterization of an atypical type IV P-type ATPase that binds to the RING motif of RUSH transcription factors.</title>
        <authorList>
            <person name="Mansharamani M."/>
            <person name="Hewetson A."/>
            <person name="Chilton B.S."/>
        </authorList>
    </citation>
    <scope>FUNCTION</scope>
    <scope>INTERACTION WITH ATP11B</scope>
</reference>
<reference key="5">
    <citation type="journal article" date="2002" name="Mol. Endocrinol.">
        <title>Identification of the RUSH consensus-binding site by cyclic amplification and selection of targets: demonstration that RUSH mediates the ability of prolactin to augment progesterone-dependent gene expression.</title>
        <authorList>
            <person name="Hewetson A."/>
            <person name="Hendrix E.C."/>
            <person name="Mansharamani M."/>
            <person name="Lee V.H."/>
            <person name="Chilton B.S."/>
        </authorList>
    </citation>
    <scope>DNA-BINDING</scope>
    <scope>INTERACTION WITH GATA4</scope>
    <scope>INDUCTION</scope>
    <scope>TISSUE SPECIFICITY</scope>
</reference>
<reference key="6">
    <citation type="journal article" date="2003" name="J. Biol. Chem.">
        <title>An Sp1-NF-Y/progesterone receptor DNA binding-dependent mechanism regulates progesterone-induced transcriptional activation of the rabbit RUSH/SMARCA3 gene.</title>
        <authorList>
            <person name="Hewetson A."/>
            <person name="Chilton B.S."/>
        </authorList>
    </citation>
    <scope>DNA-BINDING</scope>
    <scope>FUNCTION</scope>
</reference>
<reference key="7">
    <citation type="journal article" date="2004" name="Biol. Reprod.">
        <title>Prolactin signals through RUSH/SMARCA3 in the absence of a physical association with Stat5a.</title>
        <authorList>
            <person name="Hewetson A."/>
            <person name="Moore S.L."/>
            <person name="Chilton B.S."/>
        </authorList>
    </citation>
    <scope>INTERACTION WITH EGR1</scope>
    <scope>PHOSPHORYLATION</scope>
    <scope>FUNCTION</scope>
</reference>
<reference key="8">
    <citation type="journal article" date="2008" name="Biochem. Soc. Trans.">
        <title>Progesterone regulation of RUSH/SMARCA3/HLTF includes DNA looping.</title>
        <authorList>
            <person name="Chilton B.S."/>
            <person name="Hewetson A."/>
        </authorList>
    </citation>
    <scope>FUNCTION</scope>
</reference>
<reference key="9">
    <citation type="journal article" date="2008" name="Mol. Cell. Endocrinol.">
        <title>Conservation of inter-protein binding sites in RUSH and RFBP, an ATP11B isoform.</title>
        <authorList>
            <person name="Hewetson A."/>
            <person name="Wright-Pastusek A.E."/>
            <person name="Helmer R.A."/>
            <person name="Wesley K.A."/>
            <person name="Chilton B.S."/>
        </authorList>
    </citation>
    <scope>INTERACTION WITH ATP11B</scope>
    <scope>MUTAGENESIS OF PRO-767; VAL-768; ILE-769; HIS-771; ALA-792 AND LYS-793</scope>
</reference>
<reference key="10">
    <citation type="journal article" date="2008" name="Mol. Endocrinol.">
        <title>Progesterone-dependent deoxyribonucleic acid looping between RUSH/SMARCA3 and Egr-1 mediates repression by c-Rel.</title>
        <authorList>
            <person name="Hewetson A."/>
            <person name="Chilton B.S."/>
        </authorList>
    </citation>
    <scope>INTERACTION WITH EGR1 AND REL</scope>
    <scope>DNA-BINDING</scope>
    <scope>SUBCELLULAR LOCATION</scope>
    <scope>FUNCTION</scope>
</reference>
<reference key="11">
    <citation type="journal article" date="2010" name="Mol. Cell. Endocrinol.">
        <title>Prolactin-induced Jak2 phosphorylation of RUSH: a key element in Jak/RUSH signaling.</title>
        <authorList>
            <person name="Helmer R.A."/>
            <person name="Panchoo M."/>
            <person name="Dertien J.S."/>
            <person name="Bhakta S.M."/>
            <person name="Hewetson A."/>
            <person name="Chilton B.S."/>
        </authorList>
    </citation>
    <scope>SUBCELLULAR LOCATION</scope>
    <scope>INDUCTION</scope>
    <scope>PHOSPHORYLATION BY JAK2</scope>
</reference>
<reference key="12">
    <citation type="journal article" date="2011" name="Mol. Cell. Endocrinol.">
        <title>Prolactin induces Jak2 phosphorylation of RUSHY195.</title>
        <authorList>
            <person name="Helmer R.A."/>
            <person name="Dertien J.S."/>
            <person name="Chilton B.S."/>
        </authorList>
    </citation>
    <scope>FUNCTION IN SCGB1A1 PROMOTER BINDING</scope>
    <scope>PHOSPHORYLATION AT TYR-195</scope>
</reference>
<evidence type="ECO:0000250" key="1"/>
<evidence type="ECO:0000250" key="2">
    <source>
        <dbReference type="UniProtKB" id="Q14527"/>
    </source>
</evidence>
<evidence type="ECO:0000255" key="3">
    <source>
        <dbReference type="PROSITE-ProRule" id="PRU00175"/>
    </source>
</evidence>
<evidence type="ECO:0000255" key="4">
    <source>
        <dbReference type="PROSITE-ProRule" id="PRU00541"/>
    </source>
</evidence>
<evidence type="ECO:0000255" key="5">
    <source>
        <dbReference type="PROSITE-ProRule" id="PRU00542"/>
    </source>
</evidence>
<evidence type="ECO:0000256" key="6">
    <source>
        <dbReference type="SAM" id="MobiDB-lite"/>
    </source>
</evidence>
<evidence type="ECO:0000269" key="7">
    <source>
    </source>
</evidence>
<evidence type="ECO:0000269" key="8">
    <source>
    </source>
</evidence>
<evidence type="ECO:0000269" key="9">
    <source>
    </source>
</evidence>
<evidence type="ECO:0000269" key="10">
    <source>
    </source>
</evidence>
<evidence type="ECO:0000269" key="11">
    <source>
    </source>
</evidence>
<evidence type="ECO:0000269" key="12">
    <source>
    </source>
</evidence>
<evidence type="ECO:0000269" key="13">
    <source>
    </source>
</evidence>
<evidence type="ECO:0000269" key="14">
    <source>
    </source>
</evidence>
<evidence type="ECO:0000269" key="15">
    <source>
    </source>
</evidence>
<evidence type="ECO:0000269" key="16">
    <source>
    </source>
</evidence>
<evidence type="ECO:0000269" key="17">
    <source>
    </source>
</evidence>
<evidence type="ECO:0000269" key="18">
    <source>
    </source>
</evidence>
<evidence type="ECO:0000303" key="19">
    <source>
    </source>
</evidence>
<evidence type="ECO:0000305" key="20"/>
<organism>
    <name type="scientific">Oryctolagus cuniculus</name>
    <name type="common">Rabbit</name>
    <dbReference type="NCBI Taxonomy" id="9986"/>
    <lineage>
        <taxon>Eukaryota</taxon>
        <taxon>Metazoa</taxon>
        <taxon>Chordata</taxon>
        <taxon>Craniata</taxon>
        <taxon>Vertebrata</taxon>
        <taxon>Euteleostomi</taxon>
        <taxon>Mammalia</taxon>
        <taxon>Eutheria</taxon>
        <taxon>Euarchontoglires</taxon>
        <taxon>Glires</taxon>
        <taxon>Lagomorpha</taxon>
        <taxon>Leporidae</taxon>
        <taxon>Oryctolagus</taxon>
    </lineage>
</organism>
<name>HLTF_RABIT</name>
<comment type="function">
    <text evidence="1 8 10 11 12 14 16">Has both helicase and E3 ubiquitin ligase activities. Possesses intrinsic ATP-dependent nucleosome-remodeling activity. This activity may be required for transcriptional activation or repression of specific target promoters (By similarity). These may include the SERPINE1, to which this protein can bind directly. Mediates repression by c-Rel through a DNA-looping mechanism. Plays a role in error-free postreplication repair (PRR) of damaged DNA and maintains genomic stability through acting as a ubiquitin ligase for 'Lys-63'-linked polyubiquitination of chromatin-bound PCNA (By similarity). Transcriptional regulator that mediates the ability of prolactin to augment progesterone-dependent transcription of the SCGB1A1/uteroglobin gene through a bipartite progesterone receptor half-site/overlapping Y-box combination (-38/-26) where progesterone activation is attenuated by nuclear factor Y binding. Regulation also involves two GC-rich sequences in the proximal promoter (positions -162/+90) and a RUSH/SMARCA3 site (positions -616/-611) in the 5'-untranslated region.</text>
</comment>
<comment type="catalytic activity">
    <reaction>
        <text>S-ubiquitinyl-[E2 ubiquitin-conjugating enzyme]-L-cysteine + [acceptor protein]-L-lysine = [E2 ubiquitin-conjugating enzyme]-L-cysteine + N(6)-ubiquitinyl-[acceptor protein]-L-lysine.</text>
        <dbReference type="EC" id="2.3.2.27"/>
    </reaction>
</comment>
<comment type="pathway">
    <text>Protein modification; protein ubiquitination.</text>
</comment>
<comment type="subunit">
    <text evidence="1">Interacts with SP1 and SP3 independently of DNA; the interaction with these transcriptional factors may be required for basal transcription of target genes (By similarity). Interacts (via the RING-finger) with isoform RFBP of ATP11B. Progesterone-dependent isoform 1 interacts with EGR1; the interaction requires prior binding to DNA and represses c-Rel via a DNA looping mechanism. Interacts with GATA4. Interacts with PCNA; the interaction promotes polyubiquitination of PCNA through association with the UBE2B-RAD18 and UBE2V2-UBE2N ubiquitin ligase complexes. Interacts with RAD18, SHPRH, UBE2V2 and UBE2N (By similarity).</text>
</comment>
<comment type="subcellular location">
    <subcellularLocation>
        <location>Cytoplasm</location>
    </subcellularLocation>
    <subcellularLocation>
        <location>Nucleus</location>
        <location>Nucleolus</location>
    </subcellularLocation>
    <subcellularLocation>
        <location>Nucleus</location>
        <location>Nucleoplasm</location>
    </subcellularLocation>
    <text>Cytoplasmic and nuclear localization in the presence of prolactin. Nuclear localization is stimulated by progesterone.</text>
</comment>
<comment type="alternative products">
    <event type="alternative splicing"/>
    <isoform>
        <id>Q95216-1</id>
        <name>1</name>
        <name>RUSH 1-alpha</name>
        <sequence type="displayed"/>
    </isoform>
    <isoform>
        <id>Q95216-2</id>
        <name>2</name>
        <name>RUSH 1-beta</name>
        <sequence type="described" ref="VSP_012923 VSP_012924"/>
    </isoform>
</comment>
<comment type="tissue specificity">
    <text evidence="7 9 17 18">Isoform 1 is expressed preferentially in bladder, cervix, diaphragm, duodenum, epididymis, heart, kidney, liver, lung, ovary (granulosa cells), prostate, spleen, testis (predominantly in the Sertoli cells of the seminiferous tubules) and vagina. Isoform 2 is expressed preferentially in lactating mammary gland and uterine endometrium.</text>
</comment>
<comment type="induction">
    <text evidence="9 15 17">Isoform RUSH 1-alpha expression is increased by progesterone and decreased by estradiol. Progesterone induction is increased in the presence of prolactin. Isoform RUSH 1-beta/RFBP expression is increased by estrogen and decreased by progesterone.</text>
</comment>
<comment type="PTM">
    <text evidence="11 15 16">Phosphorylated on serine, threonine, and tyrosine residues. Tyr-195 phosphorylation is catalyzed by JAK2 in response to prolactin treatment. It is required for DNA binding.</text>
</comment>
<comment type="miscellaneous">
    <molecule>Isoform 1</molecule>
    <text>Major isoform in progesterone-dominant endometrium.</text>
</comment>
<comment type="miscellaneous">
    <molecule>Isoform 2</molecule>
    <text evidence="20">Truncated, estrogen-dependent isoform.</text>
</comment>
<comment type="similarity">
    <text evidence="20">Belongs to the SNF2/RAD54 helicase family. RAD16 subfamily.</text>
</comment>
<gene>
    <name type="primary">HLTF</name>
    <name type="synonym">RUSH1</name>
    <name type="synonym">SMARCA3</name>
</gene>
<protein>
    <recommendedName>
        <fullName>Helicase-like transcription factor</fullName>
        <ecNumber>2.3.2.27</ecNumber>
        <ecNumber>3.6.4.-</ecNumber>
    </recommendedName>
    <alternativeName>
        <fullName evidence="20">RING-type E3 ubiquitin transferase HLTF</fullName>
    </alternativeName>
    <alternativeName>
        <fullName>RUSH-1</fullName>
    </alternativeName>
    <alternativeName>
        <fullName>SWI/SNF-related matrix-associated actin-dependent regulator of chromatin subfamily A member 3</fullName>
    </alternativeName>
    <alternativeName>
        <fullName>Sucrose nonfermenting protein 2-like 3</fullName>
    </alternativeName>
</protein>
<proteinExistence type="evidence at protein level"/>